<feature type="chain" id="PRO_0000086915" description="Protein ECM19">
    <location>
        <begin position="1"/>
        <end position="112"/>
    </location>
</feature>
<feature type="transmembrane region" description="Helical" evidence="1">
    <location>
        <begin position="35"/>
        <end position="57"/>
    </location>
</feature>
<feature type="region of interest" description="Disordered" evidence="2">
    <location>
        <begin position="82"/>
        <end position="112"/>
    </location>
</feature>
<feature type="compositionally biased region" description="Pro residues" evidence="2">
    <location>
        <begin position="98"/>
        <end position="112"/>
    </location>
</feature>
<comment type="function">
    <text>May be involved in cell wall organization and biogenesis.</text>
</comment>
<comment type="subcellular location">
    <subcellularLocation>
        <location evidence="4">Mitochondrion membrane</location>
        <topology evidence="4">Single-pass membrane protein</topology>
    </subcellularLocation>
</comment>
<comment type="miscellaneous">
    <text evidence="3">Present with 1890 molecules/cell in log phase SD medium.</text>
</comment>
<keyword id="KW-0961">Cell wall biogenesis/degradation</keyword>
<keyword id="KW-0472">Membrane</keyword>
<keyword id="KW-0496">Mitochondrion</keyword>
<keyword id="KW-1185">Reference proteome</keyword>
<keyword id="KW-0812">Transmembrane</keyword>
<keyword id="KW-1133">Transmembrane helix</keyword>
<dbReference type="EMBL" id="U19729">
    <property type="protein sequence ID" value="AAB82349.1"/>
    <property type="molecule type" value="Genomic_DNA"/>
</dbReference>
<dbReference type="EMBL" id="AY558227">
    <property type="protein sequence ID" value="AAS56553.1"/>
    <property type="molecule type" value="Genomic_DNA"/>
</dbReference>
<dbReference type="EMBL" id="BK006945">
    <property type="protein sequence ID" value="DAA09691.1"/>
    <property type="molecule type" value="Genomic_DNA"/>
</dbReference>
<dbReference type="PIR" id="S55946">
    <property type="entry name" value="S55946"/>
</dbReference>
<dbReference type="RefSeq" id="NP_013494.3">
    <property type="nucleotide sequence ID" value="NM_001182279.3"/>
</dbReference>
<dbReference type="BioGRID" id="31649">
    <property type="interactions" value="57"/>
</dbReference>
<dbReference type="DIP" id="DIP-8813N"/>
<dbReference type="FunCoup" id="Q06011">
    <property type="interactions" value="32"/>
</dbReference>
<dbReference type="IntAct" id="Q06011">
    <property type="interactions" value="2"/>
</dbReference>
<dbReference type="MINT" id="Q06011"/>
<dbReference type="GlyGen" id="Q06011">
    <property type="glycosylation" value="3 sites"/>
</dbReference>
<dbReference type="PaxDb" id="4932-YLR390W"/>
<dbReference type="PeptideAtlas" id="Q06011"/>
<dbReference type="EnsemblFungi" id="YLR390W_mRNA">
    <property type="protein sequence ID" value="YLR390W"/>
    <property type="gene ID" value="YLR390W"/>
</dbReference>
<dbReference type="GeneID" id="851106"/>
<dbReference type="KEGG" id="sce:YLR390W"/>
<dbReference type="AGR" id="SGD:S000004382"/>
<dbReference type="SGD" id="S000004382">
    <property type="gene designation" value="ECM19"/>
</dbReference>
<dbReference type="VEuPathDB" id="FungiDB:YLR390W"/>
<dbReference type="HOGENOM" id="CLU_172029_0_0_1"/>
<dbReference type="InParanoid" id="Q06011"/>
<dbReference type="OMA" id="XTPAAPP"/>
<dbReference type="OrthoDB" id="4080273at2759"/>
<dbReference type="BioCyc" id="YEAST:G3O-32456-MONOMER"/>
<dbReference type="BioGRID-ORCS" id="851106">
    <property type="hits" value="2 hits in 10 CRISPR screens"/>
</dbReference>
<dbReference type="PRO" id="PR:Q06011"/>
<dbReference type="Proteomes" id="UP000002311">
    <property type="component" value="Chromosome XII"/>
</dbReference>
<dbReference type="RNAct" id="Q06011">
    <property type="molecule type" value="protein"/>
</dbReference>
<dbReference type="GO" id="GO:0031966">
    <property type="term" value="C:mitochondrial membrane"/>
    <property type="evidence" value="ECO:0007669"/>
    <property type="project" value="UniProtKB-SubCell"/>
</dbReference>
<dbReference type="GO" id="GO:0005739">
    <property type="term" value="C:mitochondrion"/>
    <property type="evidence" value="ECO:0007005"/>
    <property type="project" value="SGD"/>
</dbReference>
<dbReference type="GO" id="GO:0071555">
    <property type="term" value="P:cell wall organization"/>
    <property type="evidence" value="ECO:0007669"/>
    <property type="project" value="UniProtKB-KW"/>
</dbReference>
<sequence length="112" mass="12515">MDWLKNTTIVVLFSHSTDKSNKHKKRQVQCNMRKNTLDMVTIGIACLVGVYTGTRFFEPIVIDRLRKDGNLRTDIPIPEYDEDGNLLKVTPSLSSTPAAPPTPPTPPTPPQQ</sequence>
<reference key="1">
    <citation type="journal article" date="1997" name="Nature">
        <title>The nucleotide sequence of Saccharomyces cerevisiae chromosome XII.</title>
        <authorList>
            <person name="Johnston M."/>
            <person name="Hillier L.W."/>
            <person name="Riles L."/>
            <person name="Albermann K."/>
            <person name="Andre B."/>
            <person name="Ansorge W."/>
            <person name="Benes V."/>
            <person name="Brueckner M."/>
            <person name="Delius H."/>
            <person name="Dubois E."/>
            <person name="Duesterhoeft A."/>
            <person name="Entian K.-D."/>
            <person name="Floeth M."/>
            <person name="Goffeau A."/>
            <person name="Hebling U."/>
            <person name="Heumann K."/>
            <person name="Heuss-Neitzel D."/>
            <person name="Hilbert H."/>
            <person name="Hilger F."/>
            <person name="Kleine K."/>
            <person name="Koetter P."/>
            <person name="Louis E.J."/>
            <person name="Messenguy F."/>
            <person name="Mewes H.-W."/>
            <person name="Miosga T."/>
            <person name="Moestl D."/>
            <person name="Mueller-Auer S."/>
            <person name="Nentwich U."/>
            <person name="Obermaier B."/>
            <person name="Piravandi E."/>
            <person name="Pohl T.M."/>
            <person name="Portetelle D."/>
            <person name="Purnelle B."/>
            <person name="Rechmann S."/>
            <person name="Rieger M."/>
            <person name="Rinke M."/>
            <person name="Rose M."/>
            <person name="Scharfe M."/>
            <person name="Scherens B."/>
            <person name="Scholler P."/>
            <person name="Schwager C."/>
            <person name="Schwarz S."/>
            <person name="Underwood A.P."/>
            <person name="Urrestarazu L.A."/>
            <person name="Vandenbol M."/>
            <person name="Verhasselt P."/>
            <person name="Vierendeels F."/>
            <person name="Voet M."/>
            <person name="Volckaert G."/>
            <person name="Voss H."/>
            <person name="Wambutt R."/>
            <person name="Wedler E."/>
            <person name="Wedler H."/>
            <person name="Zimmermann F.K."/>
            <person name="Zollner A."/>
            <person name="Hani J."/>
            <person name="Hoheisel J.D."/>
        </authorList>
    </citation>
    <scope>NUCLEOTIDE SEQUENCE [LARGE SCALE GENOMIC DNA]</scope>
    <source>
        <strain>ATCC 204508 / S288c</strain>
    </source>
</reference>
<reference key="2">
    <citation type="journal article" date="2014" name="G3 (Bethesda)">
        <title>The reference genome sequence of Saccharomyces cerevisiae: Then and now.</title>
        <authorList>
            <person name="Engel S.R."/>
            <person name="Dietrich F.S."/>
            <person name="Fisk D.G."/>
            <person name="Binkley G."/>
            <person name="Balakrishnan R."/>
            <person name="Costanzo M.C."/>
            <person name="Dwight S.S."/>
            <person name="Hitz B.C."/>
            <person name="Karra K."/>
            <person name="Nash R.S."/>
            <person name="Weng S."/>
            <person name="Wong E.D."/>
            <person name="Lloyd P."/>
            <person name="Skrzypek M.S."/>
            <person name="Miyasato S.R."/>
            <person name="Simison M."/>
            <person name="Cherry J.M."/>
        </authorList>
    </citation>
    <scope>GENOME REANNOTATION</scope>
    <source>
        <strain>ATCC 204508 / S288c</strain>
    </source>
</reference>
<reference key="3">
    <citation type="journal article" date="2007" name="Genome Res.">
        <title>Approaching a complete repository of sequence-verified protein-encoding clones for Saccharomyces cerevisiae.</title>
        <authorList>
            <person name="Hu Y."/>
            <person name="Rolfs A."/>
            <person name="Bhullar B."/>
            <person name="Murthy T.V.S."/>
            <person name="Zhu C."/>
            <person name="Berger M.F."/>
            <person name="Camargo A.A."/>
            <person name="Kelley F."/>
            <person name="McCarron S."/>
            <person name="Jepson D."/>
            <person name="Richardson A."/>
            <person name="Raphael J."/>
            <person name="Moreira D."/>
            <person name="Taycher E."/>
            <person name="Zuo D."/>
            <person name="Mohr S."/>
            <person name="Kane M.F."/>
            <person name="Williamson J."/>
            <person name="Simpson A.J.G."/>
            <person name="Bulyk M.L."/>
            <person name="Harlow E."/>
            <person name="Marsischky G."/>
            <person name="Kolodner R.D."/>
            <person name="LaBaer J."/>
        </authorList>
    </citation>
    <scope>NUCLEOTIDE SEQUENCE [GENOMIC DNA]</scope>
    <source>
        <strain>ATCC 204508 / S288c</strain>
    </source>
</reference>
<reference key="4">
    <citation type="journal article" date="1997" name="Genetics">
        <title>Large scale identification of genes involved in cell surface biosynthesis and architecture in Saccharomyces cerevisiae.</title>
        <authorList>
            <person name="Lussier M."/>
            <person name="White A.-M."/>
            <person name="Sheraton J."/>
            <person name="di Paolo T."/>
            <person name="Treadwell J."/>
            <person name="Southard S.B."/>
            <person name="Horenstein C.I."/>
            <person name="Chen-Weiner J."/>
            <person name="Ram A.F.J."/>
            <person name="Kapteyn J.C."/>
            <person name="Roemer T.W."/>
            <person name="Vo D.H."/>
            <person name="Bondoc D.C."/>
            <person name="Hall J."/>
            <person name="Zhong W.-W."/>
            <person name="Sdicu A.-M."/>
            <person name="Davies J."/>
            <person name="Klis F.M."/>
            <person name="Robbins P.W."/>
            <person name="Bussey H."/>
        </authorList>
    </citation>
    <scope>IDENTIFICATION</scope>
</reference>
<reference key="5">
    <citation type="journal article" date="2003" name="Nature">
        <title>Global analysis of protein localization in budding yeast.</title>
        <authorList>
            <person name="Huh W.-K."/>
            <person name="Falvo J.V."/>
            <person name="Gerke L.C."/>
            <person name="Carroll A.S."/>
            <person name="Howson R.W."/>
            <person name="Weissman J.S."/>
            <person name="O'Shea E.K."/>
        </authorList>
    </citation>
    <scope>SUBCELLULAR LOCATION [LARGE SCALE ANALYSIS]</scope>
</reference>
<reference key="6">
    <citation type="journal article" date="2003" name="Nature">
        <title>Global analysis of protein expression in yeast.</title>
        <authorList>
            <person name="Ghaemmaghami S."/>
            <person name="Huh W.-K."/>
            <person name="Bower K."/>
            <person name="Howson R.W."/>
            <person name="Belle A."/>
            <person name="Dephoure N."/>
            <person name="O'Shea E.K."/>
            <person name="Weissman J.S."/>
        </authorList>
    </citation>
    <scope>LEVEL OF PROTEIN EXPRESSION [LARGE SCALE ANALYSIS]</scope>
</reference>
<reference key="7">
    <citation type="journal article" date="2006" name="J. Proteome Res.">
        <title>Toward the complete yeast mitochondrial proteome: multidimensional separation techniques for mitochondrial proteomics.</title>
        <authorList>
            <person name="Reinders J."/>
            <person name="Zahedi R.P."/>
            <person name="Pfanner N."/>
            <person name="Meisinger C."/>
            <person name="Sickmann A."/>
        </authorList>
    </citation>
    <scope>SUBCELLULAR LOCATION [LARGE SCALE ANALYSIS]</scope>
    <scope>IDENTIFICATION BY MASS SPECTROMETRY</scope>
</reference>
<proteinExistence type="evidence at protein level"/>
<accession>Q06011</accession>
<accession>D6VZ25</accession>
<gene>
    <name type="primary">ECM19</name>
    <name type="ordered locus">YLR390W</name>
</gene>
<evidence type="ECO:0000255" key="1"/>
<evidence type="ECO:0000256" key="2">
    <source>
        <dbReference type="SAM" id="MobiDB-lite"/>
    </source>
</evidence>
<evidence type="ECO:0000269" key="3">
    <source>
    </source>
</evidence>
<evidence type="ECO:0000269" key="4">
    <source>
    </source>
</evidence>
<protein>
    <recommendedName>
        <fullName>Protein ECM19</fullName>
    </recommendedName>
    <alternativeName>
        <fullName>Extracellular mutant protein 19</fullName>
    </alternativeName>
</protein>
<organism>
    <name type="scientific">Saccharomyces cerevisiae (strain ATCC 204508 / S288c)</name>
    <name type="common">Baker's yeast</name>
    <dbReference type="NCBI Taxonomy" id="559292"/>
    <lineage>
        <taxon>Eukaryota</taxon>
        <taxon>Fungi</taxon>
        <taxon>Dikarya</taxon>
        <taxon>Ascomycota</taxon>
        <taxon>Saccharomycotina</taxon>
        <taxon>Saccharomycetes</taxon>
        <taxon>Saccharomycetales</taxon>
        <taxon>Saccharomycetaceae</taxon>
        <taxon>Saccharomyces</taxon>
    </lineage>
</organism>
<name>ECM19_YEAST</name>